<gene>
    <name evidence="1" type="primary">purZ</name>
    <name type="ORF">S2L_24</name>
</gene>
<feature type="chain" id="PRO_0000453690" description="N6-succino-2-amino-2'-deoxyadenylate synthase">
    <location>
        <begin position="1"/>
        <end position="359"/>
    </location>
</feature>
<feature type="active site" description="Proton acceptor" evidence="1">
    <location>
        <position position="23"/>
    </location>
</feature>
<feature type="binding site" evidence="1">
    <location>
        <position position="23"/>
    </location>
    <ligand>
        <name>ATP</name>
        <dbReference type="ChEBI" id="CHEBI:30616"/>
    </ligand>
</feature>
<feature type="binding site" evidence="1">
    <location>
        <position position="23"/>
    </location>
    <ligand>
        <name>dGMP</name>
        <dbReference type="ChEBI" id="CHEBI:57673"/>
    </ligand>
</feature>
<feature type="binding site" evidence="1">
    <location>
        <position position="23"/>
    </location>
    <ligand>
        <name>Mg(2+)</name>
        <dbReference type="ChEBI" id="CHEBI:18420"/>
    </ligand>
</feature>
<feature type="binding site" evidence="1">
    <location>
        <position position="24"/>
    </location>
    <ligand>
        <name>ATP</name>
        <dbReference type="ChEBI" id="CHEBI:30616"/>
    </ligand>
</feature>
<feature type="binding site" evidence="1">
    <location>
        <position position="25"/>
    </location>
    <ligand>
        <name>ATP</name>
        <dbReference type="ChEBI" id="CHEBI:30616"/>
    </ligand>
</feature>
<feature type="binding site" evidence="1">
    <location>
        <position position="26"/>
    </location>
    <ligand>
        <name>ATP</name>
        <dbReference type="ChEBI" id="CHEBI:30616"/>
    </ligand>
</feature>
<feature type="binding site" evidence="1">
    <location>
        <position position="27"/>
    </location>
    <ligand>
        <name>ATP</name>
        <dbReference type="ChEBI" id="CHEBI:30616"/>
    </ligand>
</feature>
<feature type="binding site" evidence="1">
    <location>
        <position position="49"/>
    </location>
    <ligand>
        <name>dGMP</name>
        <dbReference type="ChEBI" id="CHEBI:57673"/>
    </ligand>
</feature>
<feature type="binding site" evidence="1">
    <location>
        <position position="51"/>
    </location>
    <ligand>
        <name>ATP</name>
        <dbReference type="ChEBI" id="CHEBI:30616"/>
    </ligand>
</feature>
<feature type="binding site" evidence="1">
    <location>
        <position position="51"/>
    </location>
    <ligand>
        <name>Mg(2+)</name>
        <dbReference type="ChEBI" id="CHEBI:18420"/>
    </ligand>
</feature>
<feature type="binding site" evidence="1">
    <location>
        <position position="52"/>
    </location>
    <ligand>
        <name>ATP</name>
        <dbReference type="ChEBI" id="CHEBI:30616"/>
    </ligand>
</feature>
<feature type="binding site" evidence="1">
    <location>
        <position position="53"/>
    </location>
    <ligand>
        <name>ATP</name>
        <dbReference type="ChEBI" id="CHEBI:30616"/>
    </ligand>
</feature>
<feature type="binding site" evidence="1">
    <location>
        <position position="131"/>
    </location>
    <ligand>
        <name>dGMP</name>
        <dbReference type="ChEBI" id="CHEBI:57673"/>
    </ligand>
</feature>
<feature type="binding site" evidence="1">
    <location>
        <position position="132"/>
    </location>
    <ligand>
        <name>dGMP</name>
        <dbReference type="ChEBI" id="CHEBI:57673"/>
    </ligand>
</feature>
<feature type="binding site" evidence="1">
    <location>
        <position position="146"/>
    </location>
    <ligand>
        <name>dGMP</name>
        <dbReference type="ChEBI" id="CHEBI:57673"/>
    </ligand>
</feature>
<feature type="binding site" evidence="1">
    <location>
        <position position="190"/>
    </location>
    <ligand>
        <name>ATP</name>
        <dbReference type="ChEBI" id="CHEBI:30616"/>
    </ligand>
</feature>
<feature type="binding site" evidence="1">
    <location>
        <position position="205"/>
    </location>
    <ligand>
        <name>dGMP</name>
        <dbReference type="ChEBI" id="CHEBI:57673"/>
    </ligand>
</feature>
<feature type="binding site" evidence="1">
    <location>
        <position position="274"/>
    </location>
    <ligand>
        <name>L-aspartate</name>
        <dbReference type="ChEBI" id="CHEBI:29991"/>
    </ligand>
</feature>
<feature type="binding site" evidence="1">
    <location>
        <position position="274"/>
    </location>
    <ligand>
        <name>Mg(2+)</name>
        <dbReference type="ChEBI" id="CHEBI:18420"/>
    </ligand>
</feature>
<feature type="binding site" evidence="1">
    <location>
        <position position="275"/>
    </location>
    <ligand>
        <name>L-aspartate</name>
        <dbReference type="ChEBI" id="CHEBI:29991"/>
    </ligand>
</feature>
<feature type="binding site" evidence="1">
    <location>
        <position position="280"/>
    </location>
    <ligand>
        <name>L-aspartate</name>
        <dbReference type="ChEBI" id="CHEBI:29991"/>
    </ligand>
</feature>
<feature type="binding site" evidence="1">
    <location>
        <position position="305"/>
    </location>
    <ligand>
        <name>ATP</name>
        <dbReference type="ChEBI" id="CHEBI:30616"/>
    </ligand>
</feature>
<feature type="binding site" evidence="1">
    <location>
        <position position="308"/>
    </location>
    <ligand>
        <name>ATP</name>
        <dbReference type="ChEBI" id="CHEBI:30616"/>
    </ligand>
</feature>
<feature type="strand" evidence="5">
    <location>
        <begin position="12"/>
        <end position="18"/>
    </location>
</feature>
<feature type="strand" evidence="5">
    <location>
        <begin position="20"/>
        <end position="22"/>
    </location>
</feature>
<feature type="helix" evidence="5">
    <location>
        <begin position="26"/>
        <end position="37"/>
    </location>
</feature>
<feature type="strand" evidence="5">
    <location>
        <begin position="40"/>
        <end position="44"/>
    </location>
</feature>
<feature type="strand" evidence="5">
    <location>
        <begin position="52"/>
        <end position="55"/>
    </location>
</feature>
<feature type="strand" evidence="5">
    <location>
        <begin position="61"/>
        <end position="67"/>
    </location>
</feature>
<feature type="helix" evidence="5">
    <location>
        <begin position="70"/>
        <end position="72"/>
    </location>
</feature>
<feature type="strand" evidence="5">
    <location>
        <begin position="78"/>
        <end position="81"/>
    </location>
</feature>
<feature type="helix" evidence="5">
    <location>
        <begin position="89"/>
        <end position="97"/>
    </location>
</feature>
<feature type="strand" evidence="5">
    <location>
        <begin position="104"/>
        <end position="108"/>
    </location>
</feature>
<feature type="helix" evidence="5">
    <location>
        <begin position="116"/>
        <end position="123"/>
    </location>
</feature>
<feature type="helix" evidence="5">
    <location>
        <begin position="136"/>
        <end position="145"/>
    </location>
</feature>
<feature type="helix" evidence="5">
    <location>
        <begin position="153"/>
        <end position="156"/>
    </location>
</feature>
<feature type="helix" evidence="5">
    <location>
        <begin position="157"/>
        <end position="159"/>
    </location>
</feature>
<feature type="helix" evidence="5">
    <location>
        <begin position="161"/>
        <end position="165"/>
    </location>
</feature>
<feature type="strand" evidence="5">
    <location>
        <begin position="167"/>
        <end position="169"/>
    </location>
</feature>
<feature type="helix" evidence="5">
    <location>
        <begin position="171"/>
        <end position="179"/>
    </location>
</feature>
<feature type="strand" evidence="5">
    <location>
        <begin position="182"/>
        <end position="187"/>
    </location>
</feature>
<feature type="helix" evidence="5">
    <location>
        <begin position="192"/>
        <end position="194"/>
    </location>
</feature>
<feature type="turn" evidence="5">
    <location>
        <begin position="196"/>
        <end position="198"/>
    </location>
</feature>
<feature type="helix" evidence="5">
    <location>
        <begin position="211"/>
        <end position="218"/>
    </location>
</feature>
<feature type="helix" evidence="5">
    <location>
        <begin position="222"/>
        <end position="226"/>
    </location>
</feature>
<feature type="strand" evidence="5">
    <location>
        <begin position="229"/>
        <end position="237"/>
    </location>
</feature>
<feature type="helix" evidence="5">
    <location>
        <begin position="245"/>
        <end position="247"/>
    </location>
</feature>
<feature type="helix" evidence="5">
    <location>
        <begin position="263"/>
        <end position="266"/>
    </location>
</feature>
<feature type="turn" evidence="5">
    <location>
        <begin position="274"/>
        <end position="276"/>
    </location>
</feature>
<feature type="strand" evidence="5">
    <location>
        <begin position="281"/>
        <end position="283"/>
    </location>
</feature>
<feature type="helix" evidence="5">
    <location>
        <begin position="287"/>
        <end position="297"/>
    </location>
</feature>
<feature type="strand" evidence="5">
    <location>
        <begin position="300"/>
        <end position="305"/>
    </location>
</feature>
<feature type="strand" evidence="5">
    <location>
        <begin position="310"/>
        <end position="312"/>
    </location>
</feature>
<feature type="helix" evidence="5">
    <location>
        <begin position="313"/>
        <end position="324"/>
    </location>
</feature>
<feature type="strand" evidence="5">
    <location>
        <begin position="327"/>
        <end position="337"/>
    </location>
</feature>
<feature type="helix" evidence="5">
    <location>
        <begin position="338"/>
        <end position="340"/>
    </location>
</feature>
<feature type="strand" evidence="5">
    <location>
        <begin position="341"/>
        <end position="344"/>
    </location>
</feature>
<feature type="helix" evidence="5">
    <location>
        <begin position="347"/>
        <end position="356"/>
    </location>
</feature>
<dbReference type="EC" id="6.3.4.25" evidence="1 2"/>
<dbReference type="EMBL" id="MW334946">
    <property type="protein sequence ID" value="QQG31319.1"/>
    <property type="molecule type" value="Genomic_DNA"/>
</dbReference>
<dbReference type="PDB" id="7ODX">
    <property type="method" value="X-ray"/>
    <property type="resolution" value="1.70 A"/>
    <property type="chains" value="A=1-359"/>
</dbReference>
<dbReference type="PDBsum" id="7ODX"/>
<dbReference type="SMR" id="A0A7U3TBV6"/>
<dbReference type="KEGG" id="ag:QQG31319"/>
<dbReference type="Proteomes" id="UP000595790">
    <property type="component" value="Genome"/>
</dbReference>
<dbReference type="GO" id="GO:0004019">
    <property type="term" value="F:adenylosuccinate synthase activity"/>
    <property type="evidence" value="ECO:0007669"/>
    <property type="project" value="InterPro"/>
</dbReference>
<dbReference type="GO" id="GO:0005524">
    <property type="term" value="F:ATP binding"/>
    <property type="evidence" value="ECO:0007669"/>
    <property type="project" value="UniProtKB-UniRule"/>
</dbReference>
<dbReference type="GO" id="GO:0000287">
    <property type="term" value="F:magnesium ion binding"/>
    <property type="evidence" value="ECO:0007669"/>
    <property type="project" value="UniProtKB-UniRule"/>
</dbReference>
<dbReference type="GO" id="GO:0044208">
    <property type="term" value="P:'de novo' AMP biosynthetic process"/>
    <property type="evidence" value="ECO:0007669"/>
    <property type="project" value="TreeGrafter"/>
</dbReference>
<dbReference type="GO" id="GO:0046040">
    <property type="term" value="P:IMP metabolic process"/>
    <property type="evidence" value="ECO:0007669"/>
    <property type="project" value="TreeGrafter"/>
</dbReference>
<dbReference type="GO" id="GO:0006164">
    <property type="term" value="P:purine nucleotide biosynthetic process"/>
    <property type="evidence" value="ECO:0000314"/>
    <property type="project" value="UniProtKB"/>
</dbReference>
<dbReference type="Gene3D" id="3.40.440.10">
    <property type="entry name" value="Adenylosuccinate Synthetase, subunit A, domain 1"/>
    <property type="match status" value="2"/>
</dbReference>
<dbReference type="HAMAP" id="MF_04166">
    <property type="entry name" value="Phage_PURZ"/>
    <property type="match status" value="1"/>
</dbReference>
<dbReference type="InterPro" id="IPR042109">
    <property type="entry name" value="Adenylosuccinate_synth_dom1"/>
</dbReference>
<dbReference type="InterPro" id="IPR001114">
    <property type="entry name" value="Adenylosuccinate_synthetase"/>
</dbReference>
<dbReference type="InterPro" id="IPR027417">
    <property type="entry name" value="P-loop_NTPase"/>
</dbReference>
<dbReference type="InterPro" id="IPR046383">
    <property type="entry name" value="Phage_PurZ"/>
</dbReference>
<dbReference type="NCBIfam" id="NF038379">
    <property type="entry name" value="amino_Aden_PurZ"/>
    <property type="match status" value="1"/>
</dbReference>
<dbReference type="PANTHER" id="PTHR11846">
    <property type="entry name" value="ADENYLOSUCCINATE SYNTHETASE"/>
    <property type="match status" value="1"/>
</dbReference>
<dbReference type="PANTHER" id="PTHR11846:SF0">
    <property type="entry name" value="ADENYLOSUCCINATE SYNTHETASE"/>
    <property type="match status" value="1"/>
</dbReference>
<dbReference type="Pfam" id="PF00709">
    <property type="entry name" value="Adenylsucc_synt"/>
    <property type="match status" value="2"/>
</dbReference>
<dbReference type="SMART" id="SM00788">
    <property type="entry name" value="Adenylsucc_synt"/>
    <property type="match status" value="1"/>
</dbReference>
<dbReference type="SUPFAM" id="SSF52540">
    <property type="entry name" value="P-loop containing nucleoside triphosphate hydrolases"/>
    <property type="match status" value="1"/>
</dbReference>
<sequence length="359" mass="39379">MLSIPPYYRVKNCNLIVDCQYGSTGKGLLAGYLGALEAPQVLCMAPSPNAGHTLVEEDGTARVHKMLPLGITSPSLERIYLGPGSVIDMDRLLEEYLALPRQVELWVHQNAAVVLQEHRDEEAAGGLAPGSTRSGAGSAFIAKIRRRPGTLLFGEAVRDHPLHGVVRVVDTRTAQDMLFRTRSIQAEGCQGYSLSVHHGAYPYCTARDVTTAQLIADCGLPYDVARIARVVGSMRTYPIRVANRPEAGEWSGPCYPDSVECQFADLGLEQEYTTVTKLPRRIFTFSAIQAHEAIAQNGVDEVFLNFAQYPPSLGALEDILDAIEARAEVTYVGFGPKVTDVYHTPTRAELEGLYARYRR</sequence>
<proteinExistence type="evidence at protein level"/>
<evidence type="ECO:0000255" key="1">
    <source>
        <dbReference type="HAMAP-Rule" id="MF_04166"/>
    </source>
</evidence>
<evidence type="ECO:0000269" key="2">
    <source>
    </source>
</evidence>
<evidence type="ECO:0000305" key="3"/>
<evidence type="ECO:0000305" key="4">
    <source>
    </source>
</evidence>
<evidence type="ECO:0007829" key="5">
    <source>
        <dbReference type="PDB" id="7ODX"/>
    </source>
</evidence>
<accession>A0A7U3TBV6</accession>
<protein>
    <recommendedName>
        <fullName evidence="1">N6-succino-2-amino-2'-deoxyadenylate synthase</fullName>
        <ecNumber evidence="1 2">6.3.4.25</ecNumber>
    </recommendedName>
    <alternativeName>
        <fullName evidence="3">2-amino-2'-deoxyadenylo-succinate synthase</fullName>
    </alternativeName>
    <alternativeName>
        <fullName evidence="1">PurZ</fullName>
    </alternativeName>
</protein>
<comment type="function">
    <text evidence="1 2">Involved in the synthesis of the atypical nucleotide dZTP (2-amino-2'-deoxyadenosine-5'-triphosphate) (PubMed:33926955). Catalyzes the condensation of aspartate with deoxyguanylate into dSMP (N6-succino-2-amino-2'-deoxyadenylate), which undergoes defumarylation and phosphorylation respectively by host PurB and guanylate/nucleoside diphosphate kinases to give dZTP (PubMed:33926955). dZTP is integrated into the viral genome instead of adenine by the viral DNA polymerase. This Z-base probably completely replaces adenosine and forms a triple bond to the opposite T-base (PubMed:33926955). The resulting non-standard viral DNA is called Z-genome (PubMed:33926955). The chemically modified DNA is probably harder for the host bacteria to digest with nucleases or restriction enzymes (Probable).</text>
</comment>
<comment type="catalytic activity">
    <reaction evidence="1 2">
        <text>dGMP + L-aspartate + ATP = (2S)-2-amino-2'-deoxyadenylo-succinate + ADP + phosphate + 2 H(+)</text>
        <dbReference type="Rhea" id="RHEA:67628"/>
        <dbReference type="ChEBI" id="CHEBI:15378"/>
        <dbReference type="ChEBI" id="CHEBI:29991"/>
        <dbReference type="ChEBI" id="CHEBI:30616"/>
        <dbReference type="ChEBI" id="CHEBI:43474"/>
        <dbReference type="ChEBI" id="CHEBI:57673"/>
        <dbReference type="ChEBI" id="CHEBI:172924"/>
        <dbReference type="ChEBI" id="CHEBI:456216"/>
        <dbReference type="EC" id="6.3.4.25"/>
    </reaction>
    <physiologicalReaction direction="left-to-right" evidence="4">
        <dbReference type="Rhea" id="RHEA:67629"/>
    </physiologicalReaction>
</comment>
<comment type="cofactor">
    <cofactor evidence="1 2">
        <name>Mg(2+)</name>
        <dbReference type="ChEBI" id="CHEBI:18420"/>
    </cofactor>
</comment>
<comment type="pathway">
    <text evidence="1 2">Purine metabolism.</text>
</comment>
<comment type="similarity">
    <text evidence="1">Belongs to the Caudovirales PurZ family.</text>
</comment>
<reference key="1">
    <citation type="submission" date="2020-12" db="EMBL/GenBank/DDBJ databases">
        <authorList>
            <person name="Kaminski P.A."/>
        </authorList>
    </citation>
    <scope>NUCLEOTIDE SEQUENCE [LARGE SCALE GENOMIC DNA]</scope>
</reference>
<reference key="2">
    <citation type="journal article" date="2021" name="Science">
        <title>A third purine biosynthetic pathway encoded by aminoadenine-based viral DNA genomes.</title>
        <authorList>
            <person name="Sleiman D."/>
            <person name="Garcia P.S."/>
            <person name="Lagune M."/>
            <person name="Loc'h J."/>
            <person name="Haouz A."/>
            <person name="Taib N."/>
            <person name="Roethlisberger P."/>
            <person name="Gribaldo S."/>
            <person name="Marliere P."/>
            <person name="Kaminski P.A."/>
        </authorList>
    </citation>
    <scope>FUNCTION</scope>
    <scope>CATALYTIC ACTIVITY</scope>
    <scope>COFACTOR</scope>
    <scope>PATHWAY</scope>
</reference>
<organism>
    <name type="scientific">Cyanophage S-2L</name>
    <name type="common">Cyanobacteria phage S-2L</name>
    <dbReference type="NCBI Taxonomy" id="260586"/>
    <lineage>
        <taxon>Viruses</taxon>
        <taxon>Duplodnaviria</taxon>
        <taxon>Heunggongvirae</taxon>
        <taxon>Uroviricota</taxon>
        <taxon>Caudoviricetes</taxon>
    </lineage>
</organism>
<organismHost>
    <name type="scientific">Synechococcus</name>
    <dbReference type="NCBI Taxonomy" id="1129"/>
</organismHost>
<name>PURZ_BPS2L</name>
<keyword id="KW-0002">3D-structure</keyword>
<keyword id="KW-0067">ATP-binding</keyword>
<keyword id="KW-0436">Ligase</keyword>
<keyword id="KW-0460">Magnesium</keyword>
<keyword id="KW-0479">Metal-binding</keyword>
<keyword id="KW-0547">Nucleotide-binding</keyword>
<keyword id="KW-0658">Purine biosynthesis</keyword>
<keyword id="KW-1185">Reference proteome</keyword>